<proteinExistence type="inferred from homology"/>
<reference key="1">
    <citation type="journal article" date="1997" name="J. Biol. Chem.">
        <title>Cloning and localization of a glutathione S-transferase class I gene from Anopheles gambiae.</title>
        <authorList>
            <person name="Ranson H."/>
            <person name="Cornel A.J."/>
            <person name="Fournier D."/>
            <person name="Vaughan A."/>
            <person name="Collins F.H."/>
            <person name="Hemingway J."/>
        </authorList>
    </citation>
    <scope>NUCLEOTIDE SEQUENCE [GENOMIC DNA]</scope>
    <scope>FUNCTION</scope>
    <source>
        <strain>Suakoko</strain>
    </source>
</reference>
<reference key="2">
    <citation type="journal article" date="2002" name="Science">
        <title>The genome sequence of the malaria mosquito Anopheles gambiae.</title>
        <authorList>
            <person name="Holt R.A."/>
            <person name="Subramanian G.M."/>
            <person name="Halpern A."/>
            <person name="Sutton G.G."/>
            <person name="Charlab R."/>
            <person name="Nusskern D.R."/>
            <person name="Wincker P."/>
            <person name="Clark A.G."/>
            <person name="Ribeiro J.M.C."/>
            <person name="Wides R."/>
            <person name="Salzberg S.L."/>
            <person name="Loftus B.J."/>
            <person name="Yandell M.D."/>
            <person name="Majoros W.H."/>
            <person name="Rusch D.B."/>
            <person name="Lai Z."/>
            <person name="Kraft C.L."/>
            <person name="Abril J.F."/>
            <person name="Anthouard V."/>
            <person name="Arensburger P."/>
            <person name="Atkinson P.W."/>
            <person name="Baden H."/>
            <person name="de Berardinis V."/>
            <person name="Baldwin D."/>
            <person name="Benes V."/>
            <person name="Biedler J."/>
            <person name="Blass C."/>
            <person name="Bolanos R."/>
            <person name="Boscus D."/>
            <person name="Barnstead M."/>
            <person name="Cai S."/>
            <person name="Center A."/>
            <person name="Chaturverdi K."/>
            <person name="Christophides G.K."/>
            <person name="Chrystal M.A.M."/>
            <person name="Clamp M."/>
            <person name="Cravchik A."/>
            <person name="Curwen V."/>
            <person name="Dana A."/>
            <person name="Delcher A."/>
            <person name="Dew I."/>
            <person name="Evans C.A."/>
            <person name="Flanigan M."/>
            <person name="Grundschober-Freimoser A."/>
            <person name="Friedli L."/>
            <person name="Gu Z."/>
            <person name="Guan P."/>
            <person name="Guigo R."/>
            <person name="Hillenmeyer M.E."/>
            <person name="Hladun S.L."/>
            <person name="Hogan J.R."/>
            <person name="Hong Y.S."/>
            <person name="Hoover J."/>
            <person name="Jaillon O."/>
            <person name="Ke Z."/>
            <person name="Kodira C.D."/>
            <person name="Kokoza E."/>
            <person name="Koutsos A."/>
            <person name="Letunic I."/>
            <person name="Levitsky A.A."/>
            <person name="Liang Y."/>
            <person name="Lin J.-J."/>
            <person name="Lobo N.F."/>
            <person name="Lopez J.R."/>
            <person name="Malek J.A."/>
            <person name="McIntosh T.C."/>
            <person name="Meister S."/>
            <person name="Miller J.R."/>
            <person name="Mobarry C."/>
            <person name="Mongin E."/>
            <person name="Murphy S.D."/>
            <person name="O'Brochta D.A."/>
            <person name="Pfannkoch C."/>
            <person name="Qi R."/>
            <person name="Regier M.A."/>
            <person name="Remington K."/>
            <person name="Shao H."/>
            <person name="Sharakhova M.V."/>
            <person name="Sitter C.D."/>
            <person name="Shetty J."/>
            <person name="Smith T.J."/>
            <person name="Strong R."/>
            <person name="Sun J."/>
            <person name="Thomasova D."/>
            <person name="Ton L.Q."/>
            <person name="Topalis P."/>
            <person name="Tu Z.J."/>
            <person name="Unger M.F."/>
            <person name="Walenz B."/>
            <person name="Wang A.H."/>
            <person name="Wang J."/>
            <person name="Wang M."/>
            <person name="Wang X."/>
            <person name="Woodford K.J."/>
            <person name="Wortman J.R."/>
            <person name="Wu M."/>
            <person name="Yao A."/>
            <person name="Zdobnov E.M."/>
            <person name="Zhang H."/>
            <person name="Zhao Q."/>
            <person name="Zhao S."/>
            <person name="Zhu S.C."/>
            <person name="Zhimulev I."/>
            <person name="Coluzzi M."/>
            <person name="della Torre A."/>
            <person name="Roth C.W."/>
            <person name="Louis C."/>
            <person name="Kalush F."/>
            <person name="Mural R.J."/>
            <person name="Myers E.W."/>
            <person name="Adams M.D."/>
            <person name="Smith H.O."/>
            <person name="Broder S."/>
            <person name="Gardner M.J."/>
            <person name="Fraser C.M."/>
            <person name="Birney E."/>
            <person name="Bork P."/>
            <person name="Brey P.T."/>
            <person name="Venter J.C."/>
            <person name="Weissenbach J."/>
            <person name="Kafatos F.C."/>
            <person name="Collins F.H."/>
            <person name="Hoffman S.L."/>
        </authorList>
    </citation>
    <scope>NUCLEOTIDE SEQUENCE [LARGE SCALE GENOMIC DNA]</scope>
    <source>
        <strain>PEST</strain>
    </source>
</reference>
<protein>
    <recommendedName>
        <fullName>Glutathione S-transferase 2</fullName>
        <ecNumber>2.5.1.18</ecNumber>
    </recommendedName>
    <alternativeName>
        <fullName>Aggst1-2</fullName>
    </alternativeName>
    <alternativeName>
        <fullName>GST class-theta</fullName>
    </alternativeName>
</protein>
<accession>Q94999</accession>
<accession>Q7PH22</accession>
<organism>
    <name type="scientific">Anopheles gambiae</name>
    <name type="common">African malaria mosquito</name>
    <dbReference type="NCBI Taxonomy" id="7165"/>
    <lineage>
        <taxon>Eukaryota</taxon>
        <taxon>Metazoa</taxon>
        <taxon>Ecdysozoa</taxon>
        <taxon>Arthropoda</taxon>
        <taxon>Hexapoda</taxon>
        <taxon>Insecta</taxon>
        <taxon>Pterygota</taxon>
        <taxon>Neoptera</taxon>
        <taxon>Endopterygota</taxon>
        <taxon>Diptera</taxon>
        <taxon>Nematocera</taxon>
        <taxon>Culicoidea</taxon>
        <taxon>Culicidae</taxon>
        <taxon>Anophelinae</taxon>
        <taxon>Anopheles</taxon>
    </lineage>
</organism>
<sequence>MLDFYYLPGSAPCRAVQMVAEAVHVKLNLKYLDLMAGAHRSPQFTKLNPQRTIPTLVDGSLILSESRAALIYLCDQYGDEDNDWYPRDTIQRAIVNQRLFFDACVLYPRFADFYHPQVFGNAAPDGRKRLAFEKAVELLNIFLSEHEFVAGSKMTIADISLFATLATACTLGFILRPYVHVDRWYVTMVASCPGAQANVSGAKEFLTYK</sequence>
<name>GSTT2_ANOGA</name>
<comment type="function">
    <text evidence="2">Conjugation of reduced glutathione to a wide number of exogenous and endogenous hydrophobic electrophiles.</text>
</comment>
<comment type="catalytic activity">
    <reaction>
        <text>RX + glutathione = an S-substituted glutathione + a halide anion + H(+)</text>
        <dbReference type="Rhea" id="RHEA:16437"/>
        <dbReference type="ChEBI" id="CHEBI:15378"/>
        <dbReference type="ChEBI" id="CHEBI:16042"/>
        <dbReference type="ChEBI" id="CHEBI:17792"/>
        <dbReference type="ChEBI" id="CHEBI:57925"/>
        <dbReference type="ChEBI" id="CHEBI:90779"/>
        <dbReference type="EC" id="2.5.1.18"/>
    </reaction>
</comment>
<comment type="subunit">
    <text evidence="1">Homodimer.</text>
</comment>
<comment type="similarity">
    <text evidence="3">Belongs to the GST superfamily. Theta family.</text>
</comment>
<keyword id="KW-1185">Reference proteome</keyword>
<keyword id="KW-0808">Transferase</keyword>
<gene>
    <name type="primary">GstD2</name>
    <name type="synonym">GST1-2</name>
    <name type="ORF">AGAP004165</name>
</gene>
<feature type="chain" id="PRO_0000185960" description="Glutathione S-transferase 2">
    <location>
        <begin position="1"/>
        <end position="209"/>
    </location>
</feature>
<feature type="domain" description="GST N-terminal">
    <location>
        <begin position="1"/>
        <end position="81"/>
    </location>
</feature>
<feature type="domain" description="GST C-terminal">
    <location>
        <begin position="88"/>
        <end position="209"/>
    </location>
</feature>
<feature type="binding site" evidence="1">
    <location>
        <position position="10"/>
    </location>
    <ligand>
        <name>glutathione</name>
        <dbReference type="ChEBI" id="CHEBI:57925"/>
    </ligand>
</feature>
<feature type="binding site" evidence="1">
    <location>
        <begin position="51"/>
        <end position="53"/>
    </location>
    <ligand>
        <name>glutathione</name>
        <dbReference type="ChEBI" id="CHEBI:57925"/>
    </ligand>
</feature>
<feature type="binding site" evidence="1">
    <location>
        <begin position="65"/>
        <end position="67"/>
    </location>
    <ligand>
        <name>glutathione</name>
        <dbReference type="ChEBI" id="CHEBI:57925"/>
    </ligand>
</feature>
<feature type="sequence conflict" description="In Ref. 1; CAA96104." evidence="3" ref="1">
    <original>I</original>
    <variation>V</variation>
    <location>
        <position position="62"/>
    </location>
</feature>
<dbReference type="EC" id="2.5.1.18"/>
<dbReference type="EMBL" id="Z71480">
    <property type="protein sequence ID" value="CAA96104.1"/>
    <property type="molecule type" value="Genomic_DNA"/>
</dbReference>
<dbReference type="EMBL" id="AAAB01008880">
    <property type="protein sequence ID" value="EAA44715.1"/>
    <property type="molecule type" value="Genomic_DNA"/>
</dbReference>
<dbReference type="RefSeq" id="XP_313052.1">
    <property type="nucleotide sequence ID" value="XM_313052.1"/>
</dbReference>
<dbReference type="SMR" id="Q94999"/>
<dbReference type="STRING" id="7165.Q94999"/>
<dbReference type="PaxDb" id="7165-AGAP004165-PA"/>
<dbReference type="EnsemblMetazoa" id="AGAP004165-RA">
    <property type="protein sequence ID" value="AGAP004165-PA"/>
    <property type="gene ID" value="AGAP004165"/>
</dbReference>
<dbReference type="VEuPathDB" id="VectorBase:AGAMI1_009276"/>
<dbReference type="VEuPathDB" id="VectorBase:AGAP004165"/>
<dbReference type="eggNOG" id="KOG0867">
    <property type="taxonomic scope" value="Eukaryota"/>
</dbReference>
<dbReference type="HOGENOM" id="CLU_011226_2_1_1"/>
<dbReference type="InParanoid" id="Q94999"/>
<dbReference type="OMA" id="MLDLYYL"/>
<dbReference type="PhylomeDB" id="Q94999"/>
<dbReference type="Proteomes" id="UP000007062">
    <property type="component" value="Chromosome 2R"/>
</dbReference>
<dbReference type="GO" id="GO:0004364">
    <property type="term" value="F:glutathione transferase activity"/>
    <property type="evidence" value="ECO:0000318"/>
    <property type="project" value="GO_Central"/>
</dbReference>
<dbReference type="GO" id="GO:0006749">
    <property type="term" value="P:glutathione metabolic process"/>
    <property type="evidence" value="ECO:0000318"/>
    <property type="project" value="GO_Central"/>
</dbReference>
<dbReference type="CDD" id="cd03177">
    <property type="entry name" value="GST_C_Delta_Epsilon"/>
    <property type="match status" value="1"/>
</dbReference>
<dbReference type="CDD" id="cd03045">
    <property type="entry name" value="GST_N_Delta_Epsilon"/>
    <property type="match status" value="1"/>
</dbReference>
<dbReference type="FunFam" id="3.40.30.10:FF:000034">
    <property type="entry name" value="glutathione S-transferase 1"/>
    <property type="match status" value="1"/>
</dbReference>
<dbReference type="FunFam" id="1.20.1050.10:FF:000007">
    <property type="entry name" value="Glutathione S-transferase 1-1"/>
    <property type="match status" value="1"/>
</dbReference>
<dbReference type="Gene3D" id="1.20.1050.10">
    <property type="match status" value="1"/>
</dbReference>
<dbReference type="Gene3D" id="3.40.30.10">
    <property type="entry name" value="Glutaredoxin"/>
    <property type="match status" value="1"/>
</dbReference>
<dbReference type="InterPro" id="IPR010987">
    <property type="entry name" value="Glutathione-S-Trfase_C-like"/>
</dbReference>
<dbReference type="InterPro" id="IPR036282">
    <property type="entry name" value="Glutathione-S-Trfase_C_sf"/>
</dbReference>
<dbReference type="InterPro" id="IPR040079">
    <property type="entry name" value="Glutathione_S-Trfase"/>
</dbReference>
<dbReference type="InterPro" id="IPR004045">
    <property type="entry name" value="Glutathione_S-Trfase_N"/>
</dbReference>
<dbReference type="InterPro" id="IPR004046">
    <property type="entry name" value="GST_C"/>
</dbReference>
<dbReference type="InterPro" id="IPR036249">
    <property type="entry name" value="Thioredoxin-like_sf"/>
</dbReference>
<dbReference type="PANTHER" id="PTHR43969">
    <property type="entry name" value="GLUTATHIONE S TRANSFERASE D10, ISOFORM A-RELATED"/>
    <property type="match status" value="1"/>
</dbReference>
<dbReference type="PANTHER" id="PTHR43969:SF9">
    <property type="entry name" value="GLUTATHIONE S TRANSFERASE D10, ISOFORM A-RELATED"/>
    <property type="match status" value="1"/>
</dbReference>
<dbReference type="Pfam" id="PF00043">
    <property type="entry name" value="GST_C"/>
    <property type="match status" value="1"/>
</dbReference>
<dbReference type="Pfam" id="PF13417">
    <property type="entry name" value="GST_N_3"/>
    <property type="match status" value="1"/>
</dbReference>
<dbReference type="SFLD" id="SFLDS00019">
    <property type="entry name" value="Glutathione_Transferase_(cytos"/>
    <property type="match status" value="1"/>
</dbReference>
<dbReference type="SFLD" id="SFLDG01153">
    <property type="entry name" value="Main.4:_Theta-like"/>
    <property type="match status" value="1"/>
</dbReference>
<dbReference type="SUPFAM" id="SSF47616">
    <property type="entry name" value="GST C-terminal domain-like"/>
    <property type="match status" value="1"/>
</dbReference>
<dbReference type="SUPFAM" id="SSF52833">
    <property type="entry name" value="Thioredoxin-like"/>
    <property type="match status" value="1"/>
</dbReference>
<dbReference type="PROSITE" id="PS50405">
    <property type="entry name" value="GST_CTER"/>
    <property type="match status" value="1"/>
</dbReference>
<dbReference type="PROSITE" id="PS50404">
    <property type="entry name" value="GST_NTER"/>
    <property type="match status" value="1"/>
</dbReference>
<evidence type="ECO:0000250" key="1"/>
<evidence type="ECO:0000269" key="2">
    <source>
    </source>
</evidence>
<evidence type="ECO:0000305" key="3"/>